<evidence type="ECO:0000250" key="1"/>
<evidence type="ECO:0000256" key="2">
    <source>
        <dbReference type="SAM" id="MobiDB-lite"/>
    </source>
</evidence>
<evidence type="ECO:0000305" key="3"/>
<protein>
    <recommendedName>
        <fullName>Transcription initiation factor TFIID subunit 4</fullName>
    </recommendedName>
    <alternativeName>
        <fullName>TBP-associated factor 4</fullName>
    </alternativeName>
</protein>
<dbReference type="EMBL" id="DS480404">
    <property type="protein sequence ID" value="EDO17417.1"/>
    <property type="molecule type" value="Genomic_DNA"/>
</dbReference>
<dbReference type="RefSeq" id="XP_001645275.1">
    <property type="nucleotide sequence ID" value="XM_001645225.1"/>
</dbReference>
<dbReference type="SMR" id="A7TJV5"/>
<dbReference type="FunCoup" id="A7TJV5">
    <property type="interactions" value="387"/>
</dbReference>
<dbReference type="STRING" id="436907.A7TJV5"/>
<dbReference type="GeneID" id="5545634"/>
<dbReference type="KEGG" id="vpo:Kpol_1037p13"/>
<dbReference type="eggNOG" id="KOG2341">
    <property type="taxonomic scope" value="Eukaryota"/>
</dbReference>
<dbReference type="HOGENOM" id="CLU_036634_0_0_1"/>
<dbReference type="InParanoid" id="A7TJV5"/>
<dbReference type="OMA" id="YGWLTSS"/>
<dbReference type="OrthoDB" id="21060at2759"/>
<dbReference type="PhylomeDB" id="A7TJV5"/>
<dbReference type="Proteomes" id="UP000000267">
    <property type="component" value="Unassembled WGS sequence"/>
</dbReference>
<dbReference type="GO" id="GO:0005669">
    <property type="term" value="C:transcription factor TFIID complex"/>
    <property type="evidence" value="ECO:0007669"/>
    <property type="project" value="InterPro"/>
</dbReference>
<dbReference type="GO" id="GO:0003677">
    <property type="term" value="F:DNA binding"/>
    <property type="evidence" value="ECO:0007669"/>
    <property type="project" value="TreeGrafter"/>
</dbReference>
<dbReference type="GO" id="GO:0016251">
    <property type="term" value="F:RNA polymerase II general transcription initiation factor activity"/>
    <property type="evidence" value="ECO:0007669"/>
    <property type="project" value="TreeGrafter"/>
</dbReference>
<dbReference type="GO" id="GO:0006367">
    <property type="term" value="P:transcription initiation at RNA polymerase II promoter"/>
    <property type="evidence" value="ECO:0007669"/>
    <property type="project" value="TreeGrafter"/>
</dbReference>
<dbReference type="CDD" id="cd08045">
    <property type="entry name" value="HFD_TAF4"/>
    <property type="match status" value="1"/>
</dbReference>
<dbReference type="InterPro" id="IPR045144">
    <property type="entry name" value="TAF4"/>
</dbReference>
<dbReference type="InterPro" id="IPR007900">
    <property type="entry name" value="TAF4_C"/>
</dbReference>
<dbReference type="PANTHER" id="PTHR15138">
    <property type="entry name" value="TRANSCRIPTION INITIATION FACTOR TFIID SUBUNIT 4"/>
    <property type="match status" value="1"/>
</dbReference>
<dbReference type="PANTHER" id="PTHR15138:SF14">
    <property type="entry name" value="TRANSCRIPTION INITIATION FACTOR TFIID SUBUNIT 4"/>
    <property type="match status" value="1"/>
</dbReference>
<dbReference type="Pfam" id="PF05236">
    <property type="entry name" value="TAF4"/>
    <property type="match status" value="1"/>
</dbReference>
<sequence>MSGTLSSNNNGIDTKNDNENVSGNVNGNENQTENQNQNQNENENGTGNESSNEPPMKKIKTESGLDDSNPTFDFGITTDSSSQNIENSKSTPSEFTSDSTSAFDSAVKNSDGLSLPKSVAPSTDLKKDAIPTSNSGLALPKKNEKKGKTTGGKNVNKKESGKPGAKGSQSQTDASKMSDVLFSAGVDIREEEALLTSSVAASKTQSQPAAVNIPEHPPFLHPDQVAAFMKKASKEQNFNQNFAKQGEILQMISSSCENYMRDIITNTIVISRHRRKAVKVNSGRRSEVAIALKSIAIQQKKDEERRVKKRIALGLEKEDTENKIDSEETLHRASNATAGLRAGSKKQYGWLTSSTNKPLAATGKGAGNIAAAIAARGDTGLRFREAREEPGIVMRDLLNALENRRIGSHNIITKGYARIRD</sequence>
<keyword id="KW-0539">Nucleus</keyword>
<keyword id="KW-1185">Reference proteome</keyword>
<keyword id="KW-0804">Transcription</keyword>
<keyword id="KW-0805">Transcription regulation</keyword>
<name>TAF4_VANPO</name>
<accession>A7TJV5</accession>
<reference key="1">
    <citation type="journal article" date="2007" name="Proc. Natl. Acad. Sci. U.S.A.">
        <title>Independent sorting-out of thousands of duplicated gene pairs in two yeast species descended from a whole-genome duplication.</title>
        <authorList>
            <person name="Scannell D.R."/>
            <person name="Frank A.C."/>
            <person name="Conant G.C."/>
            <person name="Byrne K.P."/>
            <person name="Woolfit M."/>
            <person name="Wolfe K.H."/>
        </authorList>
    </citation>
    <scope>NUCLEOTIDE SEQUENCE [LARGE SCALE GENOMIC DNA]</scope>
    <source>
        <strain>ATCC 22028 / DSM 70294 / BCRC 21397 / CBS 2163 / NBRC 10782 / NRRL Y-8283 / UCD 57-17</strain>
    </source>
</reference>
<organism>
    <name type="scientific">Vanderwaltozyma polyspora (strain ATCC 22028 / DSM 70294 / BCRC 21397 / CBS 2163 / NBRC 10782 / NRRL Y-8283 / UCD 57-17)</name>
    <name type="common">Kluyveromyces polysporus</name>
    <dbReference type="NCBI Taxonomy" id="436907"/>
    <lineage>
        <taxon>Eukaryota</taxon>
        <taxon>Fungi</taxon>
        <taxon>Dikarya</taxon>
        <taxon>Ascomycota</taxon>
        <taxon>Saccharomycotina</taxon>
        <taxon>Saccharomycetes</taxon>
        <taxon>Saccharomycetales</taxon>
        <taxon>Saccharomycetaceae</taxon>
        <taxon>Vanderwaltozyma</taxon>
    </lineage>
</organism>
<proteinExistence type="inferred from homology"/>
<feature type="chain" id="PRO_0000343444" description="Transcription initiation factor TFIID subunit 4">
    <location>
        <begin position="1"/>
        <end position="421"/>
    </location>
</feature>
<feature type="domain" description="Histone-fold">
    <location>
        <begin position="226"/>
        <end position="294"/>
    </location>
</feature>
<feature type="region of interest" description="Disordered" evidence="2">
    <location>
        <begin position="1"/>
        <end position="176"/>
    </location>
</feature>
<feature type="compositionally biased region" description="Polar residues" evidence="2">
    <location>
        <begin position="1"/>
        <end position="13"/>
    </location>
</feature>
<feature type="compositionally biased region" description="Low complexity" evidence="2">
    <location>
        <begin position="19"/>
        <end position="53"/>
    </location>
</feature>
<feature type="compositionally biased region" description="Polar residues" evidence="2">
    <location>
        <begin position="66"/>
        <end position="112"/>
    </location>
</feature>
<comment type="function">
    <text evidence="1">Functions as a component of the DNA-binding general transcription factor complex TFIID. Binding of TFIID to a promoter (with or without TATA element) is the initial step in pre-initiation complex (PIC) formation. TFIID plays a key role in the regulation of gene expression by RNA polymerase II through different activities such as transcription activator interaction, core promoter recognition and selectivity, TFIIA and TFIIB interaction, chromatin modification (histone acetylation by TAF1), facilitation of DNA opening and initiation of transcription (By similarity).</text>
</comment>
<comment type="subunit">
    <text evidence="1">The 1.2 MDa TFIID complex is composed of TATA binding protein (TBP) and the 14 TBP-associated factors.</text>
</comment>
<comment type="subcellular location">
    <subcellularLocation>
        <location>Nucleus</location>
    </subcellularLocation>
</comment>
<comment type="similarity">
    <text evidence="3">Belongs to the TAF4 family.</text>
</comment>
<gene>
    <name type="primary">TAF4</name>
    <name type="ORF">Kpol_1037p13</name>
</gene>